<comment type="function">
    <text evidence="1">Strong antifungal activity against fungal phytopathogens.</text>
</comment>
<comment type="subcellular location">
    <subcellularLocation>
        <location evidence="1">Secreted</location>
    </subcellularLocation>
</comment>
<protein>
    <recommendedName>
        <fullName evidence="2">Antifungal protein 1</fullName>
        <shortName evidence="2">GAFP-1</shortName>
    </recommendedName>
</protein>
<organism>
    <name type="scientific">Arachis hypogaea</name>
    <name type="common">Peanut</name>
    <dbReference type="NCBI Taxonomy" id="3818"/>
    <lineage>
        <taxon>Eukaryota</taxon>
        <taxon>Viridiplantae</taxon>
        <taxon>Streptophyta</taxon>
        <taxon>Embryophyta</taxon>
        <taxon>Tracheophyta</taxon>
        <taxon>Spermatophyta</taxon>
        <taxon>Magnoliopsida</taxon>
        <taxon>eudicotyledons</taxon>
        <taxon>Gunneridae</taxon>
        <taxon>Pentapetalae</taxon>
        <taxon>rosids</taxon>
        <taxon>fabids</taxon>
        <taxon>Fabales</taxon>
        <taxon>Fabaceae</taxon>
        <taxon>Papilionoideae</taxon>
        <taxon>50 kb inversion clade</taxon>
        <taxon>dalbergioids sensu lato</taxon>
        <taxon>Dalbergieae</taxon>
        <taxon>Pterocarpus clade</taxon>
        <taxon>Arachis</taxon>
    </lineage>
</organism>
<dbReference type="GO" id="GO:0005576">
    <property type="term" value="C:extracellular region"/>
    <property type="evidence" value="ECO:0007669"/>
    <property type="project" value="UniProtKB-SubCell"/>
</dbReference>
<dbReference type="GO" id="GO:0050832">
    <property type="term" value="P:defense response to fungus"/>
    <property type="evidence" value="ECO:0007669"/>
    <property type="project" value="UniProtKB-KW"/>
</dbReference>
<dbReference type="GO" id="GO:0031640">
    <property type="term" value="P:killing of cells of another organism"/>
    <property type="evidence" value="ECO:0007669"/>
    <property type="project" value="UniProtKB-KW"/>
</dbReference>
<sequence>LDSLSFSYNNFEEDD</sequence>
<feature type="peptide" id="PRO_0000410951" description="Antifungal protein 1" evidence="1">
    <location>
        <begin position="1"/>
        <end position="15" status="greater than"/>
    </location>
</feature>
<feature type="non-terminal residue" evidence="2">
    <location>
        <position position="1"/>
    </location>
</feature>
<feature type="non-terminal residue" evidence="2">
    <location>
        <position position="15"/>
    </location>
</feature>
<proteinExistence type="evidence at protein level"/>
<keyword id="KW-0929">Antimicrobial</keyword>
<keyword id="KW-0903">Direct protein sequencing</keyword>
<keyword id="KW-0295">Fungicide</keyword>
<keyword id="KW-0611">Plant defense</keyword>
<keyword id="KW-0964">Secreted</keyword>
<accession>P86920</accession>
<name>AFP1_ARAHY</name>
<reference evidence="3" key="1">
    <citation type="submission" date="2011-05" db="UniProtKB">
        <title>GAFP-1 from roots of Arachis hypogeae L.</title>
        <authorList>
            <person name="Indira S."/>
        </authorList>
    </citation>
    <scope>PROTEIN SEQUENCE</scope>
    <scope>FUNCTION</scope>
    <source>
        <tissue evidence="1">Root</tissue>
    </source>
</reference>
<evidence type="ECO:0000269" key="1">
    <source ref="1"/>
</evidence>
<evidence type="ECO:0000303" key="2">
    <source ref="1"/>
</evidence>
<evidence type="ECO:0000305" key="3"/>